<comment type="function">
    <text evidence="1">Catalyzes the attachment of glutamate to tRNA(Glu) in a two-step reaction: glutamate is first activated by ATP to form Glu-AMP and then transferred to the acceptor end of tRNA(Glu).</text>
</comment>
<comment type="catalytic activity">
    <reaction evidence="1">
        <text>tRNA(Glu) + L-glutamate + ATP = L-glutamyl-tRNA(Glu) + AMP + diphosphate</text>
        <dbReference type="Rhea" id="RHEA:23540"/>
        <dbReference type="Rhea" id="RHEA-COMP:9663"/>
        <dbReference type="Rhea" id="RHEA-COMP:9680"/>
        <dbReference type="ChEBI" id="CHEBI:29985"/>
        <dbReference type="ChEBI" id="CHEBI:30616"/>
        <dbReference type="ChEBI" id="CHEBI:33019"/>
        <dbReference type="ChEBI" id="CHEBI:78442"/>
        <dbReference type="ChEBI" id="CHEBI:78520"/>
        <dbReference type="ChEBI" id="CHEBI:456215"/>
        <dbReference type="EC" id="6.1.1.17"/>
    </reaction>
</comment>
<comment type="cofactor">
    <cofactor evidence="1">
        <name>Zn(2+)</name>
        <dbReference type="ChEBI" id="CHEBI:29105"/>
    </cofactor>
    <text evidence="1">Binds 1 zinc ion per subunit.</text>
</comment>
<comment type="subunit">
    <text evidence="1">Monomer.</text>
</comment>
<comment type="subcellular location">
    <subcellularLocation>
        <location evidence="1">Cytoplasm</location>
    </subcellularLocation>
</comment>
<comment type="similarity">
    <text evidence="1">Belongs to the class-I aminoacyl-tRNA synthetase family. Glutamate--tRNA ligase type 1 subfamily.</text>
</comment>
<reference key="1">
    <citation type="submission" date="2006-10" db="EMBL/GenBank/DDBJ databases">
        <title>Complete sequence of chromosome of Pelobacter propionicus DSM 2379.</title>
        <authorList>
            <consortium name="US DOE Joint Genome Institute"/>
            <person name="Copeland A."/>
            <person name="Lucas S."/>
            <person name="Lapidus A."/>
            <person name="Barry K."/>
            <person name="Detter J.C."/>
            <person name="Glavina del Rio T."/>
            <person name="Hammon N."/>
            <person name="Israni S."/>
            <person name="Dalin E."/>
            <person name="Tice H."/>
            <person name="Pitluck S."/>
            <person name="Saunders E."/>
            <person name="Brettin T."/>
            <person name="Bruce D."/>
            <person name="Han C."/>
            <person name="Tapia R."/>
            <person name="Schmutz J."/>
            <person name="Larimer F."/>
            <person name="Land M."/>
            <person name="Hauser L."/>
            <person name="Kyrpides N."/>
            <person name="Kim E."/>
            <person name="Lovley D."/>
            <person name="Richardson P."/>
        </authorList>
    </citation>
    <scope>NUCLEOTIDE SEQUENCE [LARGE SCALE GENOMIC DNA]</scope>
    <source>
        <strain>DSM 2379 / NBRC 103807 / OttBd1</strain>
    </source>
</reference>
<evidence type="ECO:0000255" key="1">
    <source>
        <dbReference type="HAMAP-Rule" id="MF_00022"/>
    </source>
</evidence>
<feature type="chain" id="PRO_1000001930" description="Glutamate--tRNA ligase">
    <location>
        <begin position="1"/>
        <end position="469"/>
    </location>
</feature>
<feature type="short sequence motif" description="'HIGH' region" evidence="1">
    <location>
        <begin position="10"/>
        <end position="20"/>
    </location>
</feature>
<feature type="short sequence motif" description="'KMSKS' region" evidence="1">
    <location>
        <begin position="238"/>
        <end position="242"/>
    </location>
</feature>
<feature type="binding site" evidence="1">
    <location>
        <position position="99"/>
    </location>
    <ligand>
        <name>Zn(2+)</name>
        <dbReference type="ChEBI" id="CHEBI:29105"/>
    </ligand>
</feature>
<feature type="binding site" evidence="1">
    <location>
        <position position="101"/>
    </location>
    <ligand>
        <name>Zn(2+)</name>
        <dbReference type="ChEBI" id="CHEBI:29105"/>
    </ligand>
</feature>
<feature type="binding site" evidence="1">
    <location>
        <position position="126"/>
    </location>
    <ligand>
        <name>Zn(2+)</name>
        <dbReference type="ChEBI" id="CHEBI:29105"/>
    </ligand>
</feature>
<feature type="binding site" evidence="1">
    <location>
        <position position="128"/>
    </location>
    <ligand>
        <name>Zn(2+)</name>
        <dbReference type="ChEBI" id="CHEBI:29105"/>
    </ligand>
</feature>
<feature type="binding site" evidence="1">
    <location>
        <position position="241"/>
    </location>
    <ligand>
        <name>ATP</name>
        <dbReference type="ChEBI" id="CHEBI:30616"/>
    </ligand>
</feature>
<organism>
    <name type="scientific">Pelobacter propionicus (strain DSM 2379 / NBRC 103807 / OttBd1)</name>
    <dbReference type="NCBI Taxonomy" id="338966"/>
    <lineage>
        <taxon>Bacteria</taxon>
        <taxon>Pseudomonadati</taxon>
        <taxon>Thermodesulfobacteriota</taxon>
        <taxon>Desulfuromonadia</taxon>
        <taxon>Desulfuromonadales</taxon>
        <taxon>Desulfuromonadaceae</taxon>
        <taxon>Pelobacter</taxon>
    </lineage>
</organism>
<gene>
    <name evidence="1" type="primary">gltX</name>
    <name type="ordered locus">Ppro_3484</name>
</gene>
<proteinExistence type="inferred from homology"/>
<name>SYE_PELPD</name>
<keyword id="KW-0030">Aminoacyl-tRNA synthetase</keyword>
<keyword id="KW-0067">ATP-binding</keyword>
<keyword id="KW-0963">Cytoplasm</keyword>
<keyword id="KW-0436">Ligase</keyword>
<keyword id="KW-0479">Metal-binding</keyword>
<keyword id="KW-0547">Nucleotide-binding</keyword>
<keyword id="KW-0648">Protein biosynthesis</keyword>
<keyword id="KW-1185">Reference proteome</keyword>
<keyword id="KW-0862">Zinc</keyword>
<sequence>MSDIRVRFAPSPTGYLHVGGARTALFNWLLARKQGGTFILRIEDTDVERSTQESVDAILQGMEWLGLDWDEGPFYQTDNFPLYREYIQKLLDEGKAYRCYCTAEELEAKRELAMKEGRKPKYDGTCRDLTEQPADRPFVVRFRAPQDGGATSFNDLIKGTITFPNDELDDLIVQRSDGTPTYNFCVVIDDAIMKITTVIRGDDHVNNTPRQVQLYQALGFPVPQFAHVPMILGSDKARLSKRHGATSVIAYRDMGFLPEALMNYLVRLGWSHGDDEIFSRDEMVAKFDISNVGRSPSVFNPDKLLWLNAHYIKHGDPQRLADLLVPFLKMRGVDPANGGPQLAVAIKTLQERARTMLEMADSALFYYHAPESYDRTALAKFEKEHLLAVYATVAEKLSAATAVTAAEFDALFKEICAEKGWKMPQVGQPVRIALSGGTHAPGIGEIIVTLGKEETIQRIQRAREFVEKQ</sequence>
<accession>A1AUQ6</accession>
<protein>
    <recommendedName>
        <fullName evidence="1">Glutamate--tRNA ligase</fullName>
        <ecNumber evidence="1">6.1.1.17</ecNumber>
    </recommendedName>
    <alternativeName>
        <fullName evidence="1">Glutamyl-tRNA synthetase</fullName>
        <shortName evidence="1">GluRS</shortName>
    </alternativeName>
</protein>
<dbReference type="EC" id="6.1.1.17" evidence="1"/>
<dbReference type="EMBL" id="CP000482">
    <property type="protein sequence ID" value="ABL01077.1"/>
    <property type="molecule type" value="Genomic_DNA"/>
</dbReference>
<dbReference type="RefSeq" id="WP_011737292.1">
    <property type="nucleotide sequence ID" value="NC_008609.1"/>
</dbReference>
<dbReference type="SMR" id="A1AUQ6"/>
<dbReference type="STRING" id="338966.Ppro_3484"/>
<dbReference type="KEGG" id="ppd:Ppro_3484"/>
<dbReference type="eggNOG" id="COG0008">
    <property type="taxonomic scope" value="Bacteria"/>
</dbReference>
<dbReference type="HOGENOM" id="CLU_015768_6_3_7"/>
<dbReference type="OrthoDB" id="9807503at2"/>
<dbReference type="Proteomes" id="UP000006732">
    <property type="component" value="Chromosome"/>
</dbReference>
<dbReference type="GO" id="GO:0005829">
    <property type="term" value="C:cytosol"/>
    <property type="evidence" value="ECO:0007669"/>
    <property type="project" value="TreeGrafter"/>
</dbReference>
<dbReference type="GO" id="GO:0005524">
    <property type="term" value="F:ATP binding"/>
    <property type="evidence" value="ECO:0007669"/>
    <property type="project" value="UniProtKB-UniRule"/>
</dbReference>
<dbReference type="GO" id="GO:0004818">
    <property type="term" value="F:glutamate-tRNA ligase activity"/>
    <property type="evidence" value="ECO:0007669"/>
    <property type="project" value="UniProtKB-UniRule"/>
</dbReference>
<dbReference type="GO" id="GO:0000049">
    <property type="term" value="F:tRNA binding"/>
    <property type="evidence" value="ECO:0007669"/>
    <property type="project" value="InterPro"/>
</dbReference>
<dbReference type="GO" id="GO:0008270">
    <property type="term" value="F:zinc ion binding"/>
    <property type="evidence" value="ECO:0007669"/>
    <property type="project" value="UniProtKB-UniRule"/>
</dbReference>
<dbReference type="GO" id="GO:0006424">
    <property type="term" value="P:glutamyl-tRNA aminoacylation"/>
    <property type="evidence" value="ECO:0007669"/>
    <property type="project" value="UniProtKB-UniRule"/>
</dbReference>
<dbReference type="CDD" id="cd00808">
    <property type="entry name" value="GluRS_core"/>
    <property type="match status" value="1"/>
</dbReference>
<dbReference type="FunFam" id="3.40.50.620:FF:000007">
    <property type="entry name" value="Glutamate--tRNA ligase"/>
    <property type="match status" value="1"/>
</dbReference>
<dbReference type="Gene3D" id="1.10.10.350">
    <property type="match status" value="1"/>
</dbReference>
<dbReference type="Gene3D" id="3.40.50.620">
    <property type="entry name" value="HUPs"/>
    <property type="match status" value="1"/>
</dbReference>
<dbReference type="HAMAP" id="MF_00022">
    <property type="entry name" value="Glu_tRNA_synth_type1"/>
    <property type="match status" value="1"/>
</dbReference>
<dbReference type="InterPro" id="IPR045462">
    <property type="entry name" value="aa-tRNA-synth_I_cd-bd"/>
</dbReference>
<dbReference type="InterPro" id="IPR020751">
    <property type="entry name" value="aa-tRNA-synth_I_codon-bd_sub2"/>
</dbReference>
<dbReference type="InterPro" id="IPR001412">
    <property type="entry name" value="aa-tRNA-synth_I_CS"/>
</dbReference>
<dbReference type="InterPro" id="IPR008925">
    <property type="entry name" value="aa_tRNA-synth_I_cd-bd_sf"/>
</dbReference>
<dbReference type="InterPro" id="IPR004527">
    <property type="entry name" value="Glu-tRNA-ligase_bac/mito"/>
</dbReference>
<dbReference type="InterPro" id="IPR000924">
    <property type="entry name" value="Glu/Gln-tRNA-synth"/>
</dbReference>
<dbReference type="InterPro" id="IPR020058">
    <property type="entry name" value="Glu/Gln-tRNA-synth_Ib_cat-dom"/>
</dbReference>
<dbReference type="InterPro" id="IPR049940">
    <property type="entry name" value="GluQ/Sye"/>
</dbReference>
<dbReference type="InterPro" id="IPR033910">
    <property type="entry name" value="GluRS_core"/>
</dbReference>
<dbReference type="InterPro" id="IPR014729">
    <property type="entry name" value="Rossmann-like_a/b/a_fold"/>
</dbReference>
<dbReference type="NCBIfam" id="TIGR00464">
    <property type="entry name" value="gltX_bact"/>
    <property type="match status" value="1"/>
</dbReference>
<dbReference type="PANTHER" id="PTHR43311">
    <property type="entry name" value="GLUTAMATE--TRNA LIGASE"/>
    <property type="match status" value="1"/>
</dbReference>
<dbReference type="PANTHER" id="PTHR43311:SF2">
    <property type="entry name" value="GLUTAMATE--TRNA LIGASE, MITOCHONDRIAL-RELATED"/>
    <property type="match status" value="1"/>
</dbReference>
<dbReference type="Pfam" id="PF19269">
    <property type="entry name" value="Anticodon_2"/>
    <property type="match status" value="1"/>
</dbReference>
<dbReference type="Pfam" id="PF00749">
    <property type="entry name" value="tRNA-synt_1c"/>
    <property type="match status" value="1"/>
</dbReference>
<dbReference type="PRINTS" id="PR00987">
    <property type="entry name" value="TRNASYNTHGLU"/>
</dbReference>
<dbReference type="SUPFAM" id="SSF48163">
    <property type="entry name" value="An anticodon-binding domain of class I aminoacyl-tRNA synthetases"/>
    <property type="match status" value="1"/>
</dbReference>
<dbReference type="SUPFAM" id="SSF52374">
    <property type="entry name" value="Nucleotidylyl transferase"/>
    <property type="match status" value="1"/>
</dbReference>
<dbReference type="PROSITE" id="PS00178">
    <property type="entry name" value="AA_TRNA_LIGASE_I"/>
    <property type="match status" value="1"/>
</dbReference>